<proteinExistence type="inferred from homology"/>
<protein>
    <recommendedName>
        <fullName evidence="2">Polymerase acidic protein</fullName>
        <ecNumber evidence="2">3.1.-.-</ecNumber>
    </recommendedName>
    <alternativeName>
        <fullName evidence="2">RNA-directed RNA polymerase subunit P2</fullName>
    </alternativeName>
</protein>
<feature type="chain" id="PRO_0000279244" description="Polymerase acidic protein">
    <location>
        <begin position="1"/>
        <end position="716"/>
    </location>
</feature>
<feature type="short sequence motif" description="Nuclear localization signal 1 (NLS1)" evidence="1 2">
    <location>
        <begin position="124"/>
        <end position="139"/>
    </location>
</feature>
<feature type="short sequence motif" description="Nuclear localization signal 2 (NLS2)" evidence="1 2">
    <location>
        <begin position="184"/>
        <end position="247"/>
    </location>
</feature>
<feature type="binding site" evidence="2">
    <location>
        <position position="41"/>
    </location>
    <ligand>
        <name>Mn(2+)</name>
        <dbReference type="ChEBI" id="CHEBI:29035"/>
        <label>1</label>
    </ligand>
</feature>
<feature type="binding site" evidence="2">
    <location>
        <position position="80"/>
    </location>
    <ligand>
        <name>Mn(2+)</name>
        <dbReference type="ChEBI" id="CHEBI:29035"/>
        <label>2</label>
    </ligand>
</feature>
<feature type="binding site" evidence="2">
    <location>
        <position position="108"/>
    </location>
    <ligand>
        <name>Mn(2+)</name>
        <dbReference type="ChEBI" id="CHEBI:29035"/>
        <label>1</label>
    </ligand>
</feature>
<feature type="binding site" evidence="2">
    <location>
        <position position="108"/>
    </location>
    <ligand>
        <name>Mn(2+)</name>
        <dbReference type="ChEBI" id="CHEBI:29035"/>
        <label>2</label>
    </ligand>
</feature>
<feature type="binding site" evidence="2">
    <location>
        <position position="119"/>
    </location>
    <ligand>
        <name>Mn(2+)</name>
        <dbReference type="ChEBI" id="CHEBI:29035"/>
        <label>1</label>
    </ligand>
</feature>
<feature type="binding site" evidence="2">
    <location>
        <position position="120"/>
    </location>
    <ligand>
        <name>Mn(2+)</name>
        <dbReference type="ChEBI" id="CHEBI:29035"/>
        <label>1</label>
    </ligand>
</feature>
<gene>
    <name evidence="2" type="primary">PA</name>
</gene>
<accession>Q0A441</accession>
<dbReference type="EC" id="3.1.-.-" evidence="2"/>
<dbReference type="EMBL" id="CY014676">
    <property type="protein sequence ID" value="ABI84541.1"/>
    <property type="molecule type" value="Genomic_RNA"/>
</dbReference>
<dbReference type="SMR" id="Q0A441"/>
<dbReference type="Proteomes" id="UP000008217">
    <property type="component" value="Genome"/>
</dbReference>
<dbReference type="GO" id="GO:0030430">
    <property type="term" value="C:host cell cytoplasm"/>
    <property type="evidence" value="ECO:0007669"/>
    <property type="project" value="UniProtKB-SubCell"/>
</dbReference>
<dbReference type="GO" id="GO:0042025">
    <property type="term" value="C:host cell nucleus"/>
    <property type="evidence" value="ECO:0007669"/>
    <property type="project" value="UniProtKB-SubCell"/>
</dbReference>
<dbReference type="GO" id="GO:0004519">
    <property type="term" value="F:endonuclease activity"/>
    <property type="evidence" value="ECO:0007669"/>
    <property type="project" value="UniProtKB-KW"/>
</dbReference>
<dbReference type="GO" id="GO:0046872">
    <property type="term" value="F:metal ion binding"/>
    <property type="evidence" value="ECO:0007669"/>
    <property type="project" value="UniProtKB-KW"/>
</dbReference>
<dbReference type="GO" id="GO:0003723">
    <property type="term" value="F:RNA binding"/>
    <property type="evidence" value="ECO:0007669"/>
    <property type="project" value="UniProtKB-UniRule"/>
</dbReference>
<dbReference type="GO" id="GO:0075526">
    <property type="term" value="P:cap snatching"/>
    <property type="evidence" value="ECO:0007669"/>
    <property type="project" value="UniProtKB-UniRule"/>
</dbReference>
<dbReference type="GO" id="GO:0006351">
    <property type="term" value="P:DNA-templated transcription"/>
    <property type="evidence" value="ECO:0007669"/>
    <property type="project" value="UniProtKB-UniRule"/>
</dbReference>
<dbReference type="GO" id="GO:0039657">
    <property type="term" value="P:symbiont-mediated suppression of host gene expression"/>
    <property type="evidence" value="ECO:0007669"/>
    <property type="project" value="UniProtKB-KW"/>
</dbReference>
<dbReference type="GO" id="GO:0039523">
    <property type="term" value="P:symbiont-mediated suppression of host mRNA transcription via inhibition of RNA polymerase II activity"/>
    <property type="evidence" value="ECO:0007669"/>
    <property type="project" value="UniProtKB-UniRule"/>
</dbReference>
<dbReference type="GO" id="GO:0039694">
    <property type="term" value="P:viral RNA genome replication"/>
    <property type="evidence" value="ECO:0007669"/>
    <property type="project" value="InterPro"/>
</dbReference>
<dbReference type="GO" id="GO:0075523">
    <property type="term" value="P:viral translational frameshifting"/>
    <property type="evidence" value="ECO:0007669"/>
    <property type="project" value="UniProtKB-KW"/>
</dbReference>
<dbReference type="FunFam" id="3.40.91.90:FF:000001">
    <property type="entry name" value="Polymerase acidic protein"/>
    <property type="match status" value="1"/>
</dbReference>
<dbReference type="Gene3D" id="3.40.91.90">
    <property type="entry name" value="Influenza RNA-dependent RNA polymerase subunit PA, endonuclease domain"/>
    <property type="match status" value="1"/>
</dbReference>
<dbReference type="HAMAP" id="MF_04063">
    <property type="entry name" value="INFV_PA"/>
    <property type="match status" value="1"/>
</dbReference>
<dbReference type="InterPro" id="IPR037534">
    <property type="entry name" value="INFV_PA"/>
</dbReference>
<dbReference type="InterPro" id="IPR001009">
    <property type="entry name" value="PA/PA-X"/>
</dbReference>
<dbReference type="InterPro" id="IPR038372">
    <property type="entry name" value="PA/PA-X_sf"/>
</dbReference>
<dbReference type="Pfam" id="PF00603">
    <property type="entry name" value="Flu_PA"/>
    <property type="match status" value="1"/>
</dbReference>
<keyword id="KW-1157">Cap snatching</keyword>
<keyword id="KW-0255">Endonuclease</keyword>
<keyword id="KW-1262">Eukaryotic host gene expression shutoff by virus</keyword>
<keyword id="KW-1191">Eukaryotic host transcription shutoff by virus</keyword>
<keyword id="KW-1035">Host cytoplasm</keyword>
<keyword id="KW-1190">Host gene expression shutoff by virus</keyword>
<keyword id="KW-1048">Host nucleus</keyword>
<keyword id="KW-0945">Host-virus interaction</keyword>
<keyword id="KW-0378">Hydrolase</keyword>
<keyword id="KW-1104">Inhibition of host RNA polymerase II by virus</keyword>
<keyword id="KW-0464">Manganese</keyword>
<keyword id="KW-0479">Metal-binding</keyword>
<keyword id="KW-0540">Nuclease</keyword>
<keyword id="KW-0597">Phosphoprotein</keyword>
<keyword id="KW-0688">Ribosomal frameshifting</keyword>
<reference key="1">
    <citation type="journal article" date="2006" name="Science">
        <title>Large-scale sequence analysis of avian influenza isolates.</title>
        <authorList>
            <person name="Obenauer J.C."/>
            <person name="Denson J."/>
            <person name="Mehta P.K."/>
            <person name="Su X."/>
            <person name="Mukatira S."/>
            <person name="Finkelstein D.B."/>
            <person name="Xu X."/>
            <person name="Wang J."/>
            <person name="Ma J."/>
            <person name="Fan Y."/>
            <person name="Rakestraw K.M."/>
            <person name="Webster R.G."/>
            <person name="Hoffmann E."/>
            <person name="Krauss S."/>
            <person name="Zheng J."/>
            <person name="Zhang Z."/>
            <person name="Naeve C.W."/>
        </authorList>
    </citation>
    <scope>NUCLEOTIDE SEQUENCE [GENOMIC RNA]</scope>
</reference>
<organismHost>
    <name type="scientific">Aves</name>
    <dbReference type="NCBI Taxonomy" id="8782"/>
</organismHost>
<comment type="function">
    <text evidence="2">Plays an essential role in viral RNA transcription and replication by forming the heterotrimeric polymerase complex together with PB1 and PB2 subunits. The complex transcribes viral mRNAs by using a unique mechanism called cap-snatching. It consists in the hijacking and cleavage of host capped pre-mRNAs. These short capped RNAs are then used as primers for viral mRNAs. The PB2 subunit is responsible for the binding of the 5' cap of cellular pre-mRNAs which are subsequently cleaved after 10-13 nucleotides by the PA subunit that carries the endonuclease activity.</text>
</comment>
<comment type="cofactor">
    <cofactor evidence="2">
        <name>Mn(2+)</name>
        <dbReference type="ChEBI" id="CHEBI:29035"/>
    </cofactor>
    <text evidence="2">Binds 2 manganese ions per subunit.</text>
</comment>
<comment type="subunit">
    <text evidence="1 2">Influenza RNA polymerase is composed of three subunits: PB1, PB2 and PA. Interacts (via C-terminus) with PB1 (via N-terminus).</text>
</comment>
<comment type="subcellular location">
    <subcellularLocation>
        <location evidence="2">Host cytoplasm</location>
    </subcellularLocation>
    <subcellularLocation>
        <location evidence="2">Host nucleus</location>
    </subcellularLocation>
    <text evidence="1 2">PB1 and PA are transported in the host nucleus as a complex.</text>
</comment>
<comment type="alternative products">
    <event type="ribosomal frameshifting"/>
    <isoform>
        <id>Q0A441-1</id>
        <name>PA</name>
        <sequence type="displayed"/>
    </isoform>
    <isoform>
        <id>P0CK82-1</id>
        <name>PA-X</name>
        <sequence type="external"/>
    </isoform>
</comment>
<comment type="PTM">
    <text evidence="1 2">Phosphorylated on serines and threonines by host kinases, including human casein kinase II.</text>
</comment>
<comment type="similarity">
    <text evidence="2">Belongs to the influenza viruses PA family.</text>
</comment>
<sequence length="716" mass="82725">MEDFVRQCFNPMIVELAEKAMKEYGEDPKIETNKFAAICTHLEVCFMYSDFHFIDERGESIIVESGDPNALLKHRFEIIEGRDRTMAWTVVNSICNTTRVEKPKFLPDLYDYKENRFIEIGVTRREVHIYYLEKANKIKSEKTHIHIFSFTGEEMATKADYTLDEESRARIKTRLFTIRQEMASRGLWDSFRQSERGEETIEERFEITGTMRRLADQSLPPNFSSLENFRAYVDGFEPNGCIEGKLSQMSKEVNARIEPFLKTTPRPLRLPDGPPCSQRSKFLLMDALKLSIEDPSHEGEGIPLYDAIKCMKTFFGWKEPNIVKPHEKGINPNYLLAWKQVLAELQYIENEEKIPKTKNMKKTSQLKWALGENMAPEKVDFEDCKNISDLKQYDSDEPEQRSLASWIQSEFNKACELTDSSWIELDEIGEDVAPIEHIASMRRNYFTAEVSHCRATEYIMKGVYINTALLNASCAAMDDFQLIPMISKCRTKEGRRKTNLYGFVIKGRSHLRNDTDVVNFVSMEFSLTDPRLEPYKWEKYCVLEIGDMLLRTAIGQVSRPMFLYVRTNGTSKIKMKWGMEMRRCLLQSLQQIESMIEAQSSVKEKDMTKEFFENKSETWPIGESPKGVEEGSIGKVCRTLLAKSVFNSLYASPQLEGFSAESRKLLLIVQALRDNLEPGTFDLGGLYEAIEECLINDPWVLLNASWFNSFLTHALK</sequence>
<organism>
    <name type="scientific">Influenza A virus (strain A/Duck/Germany/1949 H10N7)</name>
    <dbReference type="NCBI Taxonomy" id="382838"/>
    <lineage>
        <taxon>Viruses</taxon>
        <taxon>Riboviria</taxon>
        <taxon>Orthornavirae</taxon>
        <taxon>Negarnaviricota</taxon>
        <taxon>Polyploviricotina</taxon>
        <taxon>Insthoviricetes</taxon>
        <taxon>Articulavirales</taxon>
        <taxon>Orthomyxoviridae</taxon>
        <taxon>Alphainfluenzavirus</taxon>
        <taxon>Alphainfluenzavirus influenzae</taxon>
        <taxon>Influenza A virus</taxon>
    </lineage>
</organism>
<name>PA_I49A1</name>
<evidence type="ECO:0000250" key="1">
    <source>
        <dbReference type="UniProtKB" id="P03433"/>
    </source>
</evidence>
<evidence type="ECO:0000255" key="2">
    <source>
        <dbReference type="HAMAP-Rule" id="MF_04063"/>
    </source>
</evidence>